<comment type="function">
    <text evidence="1">Hydrolyzes ribosome-free peptidyl-tRNAs (with 1 or more amino acids incorporated), which drop off the ribosome during protein synthesis, or as a result of ribosome stalling.</text>
</comment>
<comment type="function">
    <text evidence="1">Catalyzes the release of premature peptidyl moieties from peptidyl-tRNA molecules trapped in stalled 50S ribosomal subunits, and thus maintains levels of free tRNAs and 50S ribosomes.</text>
</comment>
<comment type="catalytic activity">
    <reaction evidence="1">
        <text>an N-acyl-L-alpha-aminoacyl-tRNA + H2O = an N-acyl-L-amino acid + a tRNA + H(+)</text>
        <dbReference type="Rhea" id="RHEA:54448"/>
        <dbReference type="Rhea" id="RHEA-COMP:10123"/>
        <dbReference type="Rhea" id="RHEA-COMP:13883"/>
        <dbReference type="ChEBI" id="CHEBI:15377"/>
        <dbReference type="ChEBI" id="CHEBI:15378"/>
        <dbReference type="ChEBI" id="CHEBI:59874"/>
        <dbReference type="ChEBI" id="CHEBI:78442"/>
        <dbReference type="ChEBI" id="CHEBI:138191"/>
        <dbReference type="EC" id="3.1.1.29"/>
    </reaction>
</comment>
<comment type="subunit">
    <text evidence="1">Monomer.</text>
</comment>
<comment type="subcellular location">
    <subcellularLocation>
        <location evidence="1">Cytoplasm</location>
    </subcellularLocation>
</comment>
<comment type="similarity">
    <text evidence="1">Belongs to the PTH family.</text>
</comment>
<evidence type="ECO:0000255" key="1">
    <source>
        <dbReference type="HAMAP-Rule" id="MF_00083"/>
    </source>
</evidence>
<reference key="1">
    <citation type="journal article" date="2010" name="PLoS ONE">
        <title>The complete genome sequence of Cupriavidus metallidurans strain CH34, a master survivalist in harsh and anthropogenic environments.</title>
        <authorList>
            <person name="Janssen P.J."/>
            <person name="Van Houdt R."/>
            <person name="Moors H."/>
            <person name="Monsieurs P."/>
            <person name="Morin N."/>
            <person name="Michaux A."/>
            <person name="Benotmane M.A."/>
            <person name="Leys N."/>
            <person name="Vallaeys T."/>
            <person name="Lapidus A."/>
            <person name="Monchy S."/>
            <person name="Medigue C."/>
            <person name="Taghavi S."/>
            <person name="McCorkle S."/>
            <person name="Dunn J."/>
            <person name="van der Lelie D."/>
            <person name="Mergeay M."/>
        </authorList>
    </citation>
    <scope>NUCLEOTIDE SEQUENCE [LARGE SCALE GENOMIC DNA]</scope>
    <source>
        <strain>ATCC 43123 / DSM 2839 / NBRC 102507 / CH34</strain>
    </source>
</reference>
<protein>
    <recommendedName>
        <fullName evidence="1">Peptidyl-tRNA hydrolase</fullName>
        <shortName evidence="1">Pth</shortName>
        <ecNumber evidence="1">3.1.1.29</ecNumber>
    </recommendedName>
</protein>
<organism>
    <name type="scientific">Cupriavidus metallidurans (strain ATCC 43123 / DSM 2839 / NBRC 102507 / CH34)</name>
    <name type="common">Ralstonia metallidurans</name>
    <dbReference type="NCBI Taxonomy" id="266264"/>
    <lineage>
        <taxon>Bacteria</taxon>
        <taxon>Pseudomonadati</taxon>
        <taxon>Pseudomonadota</taxon>
        <taxon>Betaproteobacteria</taxon>
        <taxon>Burkholderiales</taxon>
        <taxon>Burkholderiaceae</taxon>
        <taxon>Cupriavidus</taxon>
    </lineage>
</organism>
<accession>Q1LRQ3</accession>
<feature type="chain" id="PRO_0000264086" description="Peptidyl-tRNA hydrolase">
    <location>
        <begin position="1"/>
        <end position="198"/>
    </location>
</feature>
<feature type="active site" description="Proton acceptor" evidence="1">
    <location>
        <position position="20"/>
    </location>
</feature>
<feature type="binding site" evidence="1">
    <location>
        <position position="15"/>
    </location>
    <ligand>
        <name>tRNA</name>
        <dbReference type="ChEBI" id="CHEBI:17843"/>
    </ligand>
</feature>
<feature type="binding site" evidence="1">
    <location>
        <position position="66"/>
    </location>
    <ligand>
        <name>tRNA</name>
        <dbReference type="ChEBI" id="CHEBI:17843"/>
    </ligand>
</feature>
<feature type="binding site" evidence="1">
    <location>
        <position position="68"/>
    </location>
    <ligand>
        <name>tRNA</name>
        <dbReference type="ChEBI" id="CHEBI:17843"/>
    </ligand>
</feature>
<feature type="binding site" evidence="1">
    <location>
        <position position="114"/>
    </location>
    <ligand>
        <name>tRNA</name>
        <dbReference type="ChEBI" id="CHEBI:17843"/>
    </ligand>
</feature>
<feature type="site" description="Discriminates between blocked and unblocked aminoacyl-tRNA" evidence="1">
    <location>
        <position position="10"/>
    </location>
</feature>
<feature type="site" description="Stabilizes the basic form of H active site to accept a proton" evidence="1">
    <location>
        <position position="93"/>
    </location>
</feature>
<sequence length="198" mass="21630">MIKLIVGLGNPGAEYEATRHNAGFWLVDQLARMGGTTLRVESRFHGLAGRARLWDQDVWLLKPSTFMNRSGLSVVSLARFYKILPDEIVVAHDEMDLPAGSAKLKRGGGSGGHNGLKDISAHLTTQDYWRLRIGVGHPRNAPGGAAGGREDVVNFVLKPPRKEEQQAIDEAIDRCIGPLGTLARGESERAMMELHTGR</sequence>
<name>PTH_CUPMC</name>
<keyword id="KW-0963">Cytoplasm</keyword>
<keyword id="KW-0378">Hydrolase</keyword>
<keyword id="KW-1185">Reference proteome</keyword>
<keyword id="KW-0694">RNA-binding</keyword>
<keyword id="KW-0820">tRNA-binding</keyword>
<dbReference type="EC" id="3.1.1.29" evidence="1"/>
<dbReference type="EMBL" id="CP000352">
    <property type="protein sequence ID" value="ABF07173.1"/>
    <property type="molecule type" value="Genomic_DNA"/>
</dbReference>
<dbReference type="RefSeq" id="WP_011515176.1">
    <property type="nucleotide sequence ID" value="NC_007973.1"/>
</dbReference>
<dbReference type="SMR" id="Q1LRQ3"/>
<dbReference type="STRING" id="266264.Rmet_0287"/>
<dbReference type="KEGG" id="rme:Rmet_0287"/>
<dbReference type="eggNOG" id="COG0193">
    <property type="taxonomic scope" value="Bacteria"/>
</dbReference>
<dbReference type="HOGENOM" id="CLU_062456_3_1_4"/>
<dbReference type="Proteomes" id="UP000002429">
    <property type="component" value="Chromosome"/>
</dbReference>
<dbReference type="GO" id="GO:0005737">
    <property type="term" value="C:cytoplasm"/>
    <property type="evidence" value="ECO:0007669"/>
    <property type="project" value="UniProtKB-SubCell"/>
</dbReference>
<dbReference type="GO" id="GO:0004045">
    <property type="term" value="F:peptidyl-tRNA hydrolase activity"/>
    <property type="evidence" value="ECO:0007669"/>
    <property type="project" value="UniProtKB-UniRule"/>
</dbReference>
<dbReference type="GO" id="GO:0000049">
    <property type="term" value="F:tRNA binding"/>
    <property type="evidence" value="ECO:0007669"/>
    <property type="project" value="UniProtKB-UniRule"/>
</dbReference>
<dbReference type="GO" id="GO:0006515">
    <property type="term" value="P:protein quality control for misfolded or incompletely synthesized proteins"/>
    <property type="evidence" value="ECO:0007669"/>
    <property type="project" value="UniProtKB-UniRule"/>
</dbReference>
<dbReference type="GO" id="GO:0072344">
    <property type="term" value="P:rescue of stalled ribosome"/>
    <property type="evidence" value="ECO:0007669"/>
    <property type="project" value="UniProtKB-UniRule"/>
</dbReference>
<dbReference type="CDD" id="cd00462">
    <property type="entry name" value="PTH"/>
    <property type="match status" value="1"/>
</dbReference>
<dbReference type="FunFam" id="3.40.50.1470:FF:000001">
    <property type="entry name" value="Peptidyl-tRNA hydrolase"/>
    <property type="match status" value="1"/>
</dbReference>
<dbReference type="Gene3D" id="3.40.50.1470">
    <property type="entry name" value="Peptidyl-tRNA hydrolase"/>
    <property type="match status" value="1"/>
</dbReference>
<dbReference type="HAMAP" id="MF_00083">
    <property type="entry name" value="Pept_tRNA_hydro_bact"/>
    <property type="match status" value="1"/>
</dbReference>
<dbReference type="InterPro" id="IPR001328">
    <property type="entry name" value="Pept_tRNA_hydro"/>
</dbReference>
<dbReference type="InterPro" id="IPR018171">
    <property type="entry name" value="Pept_tRNA_hydro_CS"/>
</dbReference>
<dbReference type="InterPro" id="IPR036416">
    <property type="entry name" value="Pept_tRNA_hydro_sf"/>
</dbReference>
<dbReference type="NCBIfam" id="TIGR00447">
    <property type="entry name" value="pth"/>
    <property type="match status" value="1"/>
</dbReference>
<dbReference type="PANTHER" id="PTHR17224">
    <property type="entry name" value="PEPTIDYL-TRNA HYDROLASE"/>
    <property type="match status" value="1"/>
</dbReference>
<dbReference type="PANTHER" id="PTHR17224:SF1">
    <property type="entry name" value="PEPTIDYL-TRNA HYDROLASE"/>
    <property type="match status" value="1"/>
</dbReference>
<dbReference type="Pfam" id="PF01195">
    <property type="entry name" value="Pept_tRNA_hydro"/>
    <property type="match status" value="1"/>
</dbReference>
<dbReference type="SUPFAM" id="SSF53178">
    <property type="entry name" value="Peptidyl-tRNA hydrolase-like"/>
    <property type="match status" value="1"/>
</dbReference>
<dbReference type="PROSITE" id="PS01195">
    <property type="entry name" value="PEPT_TRNA_HYDROL_1"/>
    <property type="match status" value="1"/>
</dbReference>
<dbReference type="PROSITE" id="PS01196">
    <property type="entry name" value="PEPT_TRNA_HYDROL_2"/>
    <property type="match status" value="1"/>
</dbReference>
<gene>
    <name evidence="1" type="primary">pth</name>
    <name type="ordered locus">Rmet_0287</name>
</gene>
<proteinExistence type="inferred from homology"/>